<proteinExistence type="inferred from homology"/>
<organism>
    <name type="scientific">Shewanella frigidimarina (strain NCIMB 400)</name>
    <dbReference type="NCBI Taxonomy" id="318167"/>
    <lineage>
        <taxon>Bacteria</taxon>
        <taxon>Pseudomonadati</taxon>
        <taxon>Pseudomonadota</taxon>
        <taxon>Gammaproteobacteria</taxon>
        <taxon>Alteromonadales</taxon>
        <taxon>Shewanellaceae</taxon>
        <taxon>Shewanella</taxon>
    </lineage>
</organism>
<accession>Q080T4</accession>
<evidence type="ECO:0000255" key="1">
    <source>
        <dbReference type="HAMAP-Rule" id="MF_01187"/>
    </source>
</evidence>
<sequence>MAFDKKLLEIVACPVCKGKLDYDKESQQLICKFDKLAYPITEGIPVLLENRATAIVTE</sequence>
<comment type="similarity">
    <text evidence="1">Belongs to the UPF0434 family.</text>
</comment>
<name>Y2386_SHEFN</name>
<gene>
    <name type="ordered locus">Sfri_2386</name>
</gene>
<dbReference type="EMBL" id="CP000447">
    <property type="protein sequence ID" value="ABI72231.1"/>
    <property type="molecule type" value="Genomic_DNA"/>
</dbReference>
<dbReference type="SMR" id="Q080T4"/>
<dbReference type="STRING" id="318167.Sfri_2386"/>
<dbReference type="KEGG" id="sfr:Sfri_2386"/>
<dbReference type="eggNOG" id="COG2835">
    <property type="taxonomic scope" value="Bacteria"/>
</dbReference>
<dbReference type="HOGENOM" id="CLU_155659_3_1_6"/>
<dbReference type="OrthoDB" id="9812205at2"/>
<dbReference type="Proteomes" id="UP000000684">
    <property type="component" value="Chromosome"/>
</dbReference>
<dbReference type="GO" id="GO:0005829">
    <property type="term" value="C:cytosol"/>
    <property type="evidence" value="ECO:0007669"/>
    <property type="project" value="TreeGrafter"/>
</dbReference>
<dbReference type="FunFam" id="2.20.25.10:FF:000002">
    <property type="entry name" value="UPF0434 protein YcaR"/>
    <property type="match status" value="1"/>
</dbReference>
<dbReference type="Gene3D" id="2.20.25.10">
    <property type="match status" value="1"/>
</dbReference>
<dbReference type="HAMAP" id="MF_01187">
    <property type="entry name" value="UPF0434"/>
    <property type="match status" value="1"/>
</dbReference>
<dbReference type="InterPro" id="IPR005651">
    <property type="entry name" value="Trm112-like"/>
</dbReference>
<dbReference type="PANTHER" id="PTHR33505:SF4">
    <property type="entry name" value="PROTEIN PREY, MITOCHONDRIAL"/>
    <property type="match status" value="1"/>
</dbReference>
<dbReference type="PANTHER" id="PTHR33505">
    <property type="entry name" value="ZGC:162634"/>
    <property type="match status" value="1"/>
</dbReference>
<dbReference type="Pfam" id="PF03966">
    <property type="entry name" value="Trm112p"/>
    <property type="match status" value="1"/>
</dbReference>
<dbReference type="SUPFAM" id="SSF158997">
    <property type="entry name" value="Trm112p-like"/>
    <property type="match status" value="1"/>
</dbReference>
<reference key="1">
    <citation type="submission" date="2006-08" db="EMBL/GenBank/DDBJ databases">
        <title>Complete sequence of Shewanella frigidimarina NCIMB 400.</title>
        <authorList>
            <consortium name="US DOE Joint Genome Institute"/>
            <person name="Copeland A."/>
            <person name="Lucas S."/>
            <person name="Lapidus A."/>
            <person name="Barry K."/>
            <person name="Detter J.C."/>
            <person name="Glavina del Rio T."/>
            <person name="Hammon N."/>
            <person name="Israni S."/>
            <person name="Dalin E."/>
            <person name="Tice H."/>
            <person name="Pitluck S."/>
            <person name="Fredrickson J.K."/>
            <person name="Kolker E."/>
            <person name="McCuel L.A."/>
            <person name="DiChristina T."/>
            <person name="Nealson K.H."/>
            <person name="Newman D."/>
            <person name="Tiedje J.M."/>
            <person name="Zhou J."/>
            <person name="Romine M.F."/>
            <person name="Culley D.E."/>
            <person name="Serres M."/>
            <person name="Chertkov O."/>
            <person name="Brettin T."/>
            <person name="Bruce D."/>
            <person name="Han C."/>
            <person name="Tapia R."/>
            <person name="Gilna P."/>
            <person name="Schmutz J."/>
            <person name="Larimer F."/>
            <person name="Land M."/>
            <person name="Hauser L."/>
            <person name="Kyrpides N."/>
            <person name="Mikhailova N."/>
            <person name="Richardson P."/>
        </authorList>
    </citation>
    <scope>NUCLEOTIDE SEQUENCE [LARGE SCALE GENOMIC DNA]</scope>
    <source>
        <strain>NCIMB 400</strain>
    </source>
</reference>
<protein>
    <recommendedName>
        <fullName evidence="1">UPF0434 protein Sfri_2386</fullName>
    </recommendedName>
</protein>
<keyword id="KW-1185">Reference proteome</keyword>
<feature type="chain" id="PRO_0000291164" description="UPF0434 protein Sfri_2386">
    <location>
        <begin position="1"/>
        <end position="58"/>
    </location>
</feature>